<proteinExistence type="evidence at protein level"/>
<accession>Q5SHR6</accession>
<name>RPOA_THET8</name>
<feature type="chain" id="PRO_0000175408" description="DNA-directed RNA polymerase subunit alpha">
    <location>
        <begin position="1"/>
        <end position="315"/>
    </location>
</feature>
<feature type="region of interest" description="Alpha N-terminal domain (alpha-NTD)" evidence="1">
    <location>
        <begin position="1"/>
        <end position="229"/>
    </location>
</feature>
<feature type="region of interest" description="Alpha C-terminal domain (alpha-CTD)" evidence="1">
    <location>
        <begin position="247"/>
        <end position="315"/>
    </location>
</feature>
<feature type="turn" evidence="4">
    <location>
        <begin position="4"/>
        <end position="6"/>
    </location>
</feature>
<feature type="strand" evidence="4">
    <location>
        <begin position="10"/>
        <end position="16"/>
    </location>
</feature>
<feature type="turn" evidence="4">
    <location>
        <begin position="17"/>
        <end position="19"/>
    </location>
</feature>
<feature type="strand" evidence="4">
    <location>
        <begin position="20"/>
        <end position="28"/>
    </location>
</feature>
<feature type="helix" evidence="4">
    <location>
        <begin position="33"/>
        <end position="46"/>
    </location>
</feature>
<feature type="strand" evidence="4">
    <location>
        <begin position="49"/>
        <end position="60"/>
    </location>
</feature>
<feature type="strand" evidence="9">
    <location>
        <begin position="63"/>
        <end position="65"/>
    </location>
</feature>
<feature type="strand" evidence="4">
    <location>
        <begin position="71"/>
        <end position="74"/>
    </location>
</feature>
<feature type="helix" evidence="4">
    <location>
        <begin position="75"/>
        <end position="83"/>
    </location>
</feature>
<feature type="strand" evidence="4">
    <location>
        <begin position="87"/>
        <end position="89"/>
    </location>
</feature>
<feature type="strand" evidence="3">
    <location>
        <begin position="91"/>
        <end position="93"/>
    </location>
</feature>
<feature type="strand" evidence="5">
    <location>
        <begin position="95"/>
        <end position="98"/>
    </location>
</feature>
<feature type="strand" evidence="4">
    <location>
        <begin position="99"/>
        <end position="106"/>
    </location>
</feature>
<feature type="strand" evidence="4">
    <location>
        <begin position="108"/>
        <end position="110"/>
    </location>
</feature>
<feature type="helix" evidence="4">
    <location>
        <begin position="111"/>
        <end position="113"/>
    </location>
</feature>
<feature type="strand" evidence="4">
    <location>
        <begin position="120"/>
        <end position="123"/>
    </location>
</feature>
<feature type="strand" evidence="4">
    <location>
        <begin position="128"/>
        <end position="132"/>
    </location>
</feature>
<feature type="strand" evidence="4">
    <location>
        <begin position="137"/>
        <end position="151"/>
    </location>
</feature>
<feature type="helix" evidence="4">
    <location>
        <begin position="153"/>
        <end position="156"/>
    </location>
</feature>
<feature type="strand" evidence="6">
    <location>
        <begin position="160"/>
        <end position="163"/>
    </location>
</feature>
<feature type="strand" evidence="7">
    <location>
        <begin position="164"/>
        <end position="166"/>
    </location>
</feature>
<feature type="strand" evidence="4">
    <location>
        <begin position="174"/>
        <end position="183"/>
    </location>
</feature>
<feature type="strand" evidence="8">
    <location>
        <begin position="187"/>
        <end position="189"/>
    </location>
</feature>
<feature type="strand" evidence="4">
    <location>
        <begin position="193"/>
        <end position="201"/>
    </location>
</feature>
<feature type="strand" evidence="4">
    <location>
        <begin position="203"/>
        <end position="205"/>
    </location>
</feature>
<feature type="helix" evidence="4">
    <location>
        <begin position="207"/>
        <end position="223"/>
    </location>
</feature>
<feature type="strand" evidence="10">
    <location>
        <begin position="226"/>
        <end position="228"/>
    </location>
</feature>
<dbReference type="EC" id="2.7.7.6"/>
<dbReference type="EMBL" id="AB024328">
    <property type="protein sequence ID" value="BAA75549.1"/>
    <property type="molecule type" value="Genomic_DNA"/>
</dbReference>
<dbReference type="EMBL" id="AP008226">
    <property type="protein sequence ID" value="BAD71487.1"/>
    <property type="molecule type" value="Genomic_DNA"/>
</dbReference>
<dbReference type="RefSeq" id="WP_011173698.1">
    <property type="nucleotide sequence ID" value="NC_006461.1"/>
</dbReference>
<dbReference type="RefSeq" id="YP_144930.1">
    <property type="nucleotide sequence ID" value="NC_006461.1"/>
</dbReference>
<dbReference type="PDB" id="1ZYR">
    <property type="method" value="X-ray"/>
    <property type="resolution" value="3.00 A"/>
    <property type="chains" value="A/B/K/L=1-315"/>
</dbReference>
<dbReference type="PDB" id="2A68">
    <property type="method" value="X-ray"/>
    <property type="resolution" value="2.50 A"/>
    <property type="chains" value="A/B/K/L=1-315"/>
</dbReference>
<dbReference type="PDB" id="2A69">
    <property type="method" value="X-ray"/>
    <property type="resolution" value="2.50 A"/>
    <property type="chains" value="A/B/K/L=1-315"/>
</dbReference>
<dbReference type="PDB" id="2A6E">
    <property type="method" value="X-ray"/>
    <property type="resolution" value="2.80 A"/>
    <property type="chains" value="A/B/K/L=1-315"/>
</dbReference>
<dbReference type="PDB" id="2A6H">
    <property type="method" value="X-ray"/>
    <property type="resolution" value="2.40 A"/>
    <property type="chains" value="A/B/K/L=1-315"/>
</dbReference>
<dbReference type="PDB" id="2BE5">
    <property type="method" value="X-ray"/>
    <property type="resolution" value="2.40 A"/>
    <property type="chains" value="A/B/K/L=1-315"/>
</dbReference>
<dbReference type="PDB" id="2CW0">
    <property type="method" value="X-ray"/>
    <property type="resolution" value="3.30 A"/>
    <property type="chains" value="A/B/K/L=1-315"/>
</dbReference>
<dbReference type="PDB" id="2O5I">
    <property type="method" value="X-ray"/>
    <property type="resolution" value="2.50 A"/>
    <property type="chains" value="A/B/K/L=1-315"/>
</dbReference>
<dbReference type="PDB" id="2O5J">
    <property type="method" value="X-ray"/>
    <property type="resolution" value="3.00 A"/>
    <property type="chains" value="A/B/K/L=1-315"/>
</dbReference>
<dbReference type="PDB" id="3AOH">
    <property type="method" value="X-ray"/>
    <property type="resolution" value="4.10 A"/>
    <property type="chains" value="A/B/F/G/K/L=1-315"/>
</dbReference>
<dbReference type="PDB" id="3AOI">
    <property type="method" value="X-ray"/>
    <property type="resolution" value="4.30 A"/>
    <property type="chains" value="A/B/F/G/K/L=1-315"/>
</dbReference>
<dbReference type="PDB" id="3DXJ">
    <property type="method" value="X-ray"/>
    <property type="resolution" value="3.00 A"/>
    <property type="chains" value="A/B/K/L=1-315"/>
</dbReference>
<dbReference type="PDB" id="3WOD">
    <property type="method" value="X-ray"/>
    <property type="resolution" value="3.60 A"/>
    <property type="chains" value="A/B=1-315"/>
</dbReference>
<dbReference type="PDB" id="4G7H">
    <property type="method" value="X-ray"/>
    <property type="resolution" value="2.90 A"/>
    <property type="chains" value="A/B/K/L=1-315"/>
</dbReference>
<dbReference type="PDB" id="4G7O">
    <property type="method" value="X-ray"/>
    <property type="resolution" value="2.99 A"/>
    <property type="chains" value="A/B/K/L=1-315"/>
</dbReference>
<dbReference type="PDB" id="4G7Z">
    <property type="method" value="X-ray"/>
    <property type="resolution" value="3.82 A"/>
    <property type="chains" value="A/B/K/L=1-315"/>
</dbReference>
<dbReference type="PDB" id="4GZY">
    <property type="method" value="X-ray"/>
    <property type="resolution" value="3.51 A"/>
    <property type="chains" value="A/B=1-315"/>
</dbReference>
<dbReference type="PDB" id="4GZZ">
    <property type="method" value="X-ray"/>
    <property type="resolution" value="4.29 A"/>
    <property type="chains" value="A/B=1-315"/>
</dbReference>
<dbReference type="PDB" id="4MQ9">
    <property type="method" value="X-ray"/>
    <property type="resolution" value="3.35 A"/>
    <property type="chains" value="A/B=1-314"/>
</dbReference>
<dbReference type="PDB" id="4OIN">
    <property type="method" value="X-ray"/>
    <property type="resolution" value="2.80 A"/>
    <property type="chains" value="A/B=1-315"/>
</dbReference>
<dbReference type="PDB" id="4OIO">
    <property type="method" value="X-ray"/>
    <property type="resolution" value="3.10 A"/>
    <property type="chains" value="A/B=1-315"/>
</dbReference>
<dbReference type="PDB" id="4OIP">
    <property type="method" value="X-ray"/>
    <property type="resolution" value="3.40 A"/>
    <property type="chains" value="A/B=1-315"/>
</dbReference>
<dbReference type="PDB" id="4OIQ">
    <property type="method" value="X-ray"/>
    <property type="resolution" value="3.62 A"/>
    <property type="chains" value="A/B=1-315"/>
</dbReference>
<dbReference type="PDB" id="4OIR">
    <property type="method" value="X-ray"/>
    <property type="resolution" value="3.10 A"/>
    <property type="chains" value="A/B=1-305"/>
</dbReference>
<dbReference type="PDB" id="4WQS">
    <property type="method" value="X-ray"/>
    <property type="resolution" value="4.31 A"/>
    <property type="chains" value="A/B/K/L=1-315"/>
</dbReference>
<dbReference type="PDB" id="4WQT">
    <property type="method" value="X-ray"/>
    <property type="resolution" value="4.40 A"/>
    <property type="chains" value="A/B/F/G/K/L=1-315"/>
</dbReference>
<dbReference type="PDB" id="5D4C">
    <property type="method" value="X-ray"/>
    <property type="resolution" value="3.28 A"/>
    <property type="chains" value="A/B/K/L=1-315"/>
</dbReference>
<dbReference type="PDB" id="5D4D">
    <property type="method" value="X-ray"/>
    <property type="resolution" value="3.00 A"/>
    <property type="chains" value="A/B/K/L=1-315"/>
</dbReference>
<dbReference type="PDB" id="5D4E">
    <property type="method" value="X-ray"/>
    <property type="resolution" value="3.08 A"/>
    <property type="chains" value="A/B/K/L=1-315"/>
</dbReference>
<dbReference type="PDB" id="5E17">
    <property type="method" value="X-ray"/>
    <property type="resolution" value="3.20 A"/>
    <property type="chains" value="A/B=1-315"/>
</dbReference>
<dbReference type="PDB" id="5E18">
    <property type="method" value="X-ray"/>
    <property type="resolution" value="3.30 A"/>
    <property type="chains" value="A/B=1-315"/>
</dbReference>
<dbReference type="PDB" id="5I2D">
    <property type="method" value="X-ray"/>
    <property type="resolution" value="4.41 A"/>
    <property type="chains" value="A/B/L/M=1-315"/>
</dbReference>
<dbReference type="PDB" id="5TMC">
    <property type="method" value="X-ray"/>
    <property type="resolution" value="2.71 A"/>
    <property type="chains" value="A/B=1-315"/>
</dbReference>
<dbReference type="PDB" id="5TMF">
    <property type="method" value="X-ray"/>
    <property type="resolution" value="3.00 A"/>
    <property type="chains" value="A/B=1-315"/>
</dbReference>
<dbReference type="PDB" id="5VO8">
    <property type="method" value="X-ray"/>
    <property type="resolution" value="3.30 A"/>
    <property type="chains" value="A/B=1-315"/>
</dbReference>
<dbReference type="PDB" id="5VOI">
    <property type="method" value="X-ray"/>
    <property type="resolution" value="2.80 A"/>
    <property type="chains" value="A/B=1-315"/>
</dbReference>
<dbReference type="PDB" id="5X21">
    <property type="method" value="X-ray"/>
    <property type="resolution" value="3.32 A"/>
    <property type="chains" value="A/B=1-315"/>
</dbReference>
<dbReference type="PDB" id="5X22">
    <property type="method" value="X-ray"/>
    <property type="resolution" value="3.35 A"/>
    <property type="chains" value="A/B/K/L=1-315"/>
</dbReference>
<dbReference type="PDB" id="5XJ0">
    <property type="method" value="X-ray"/>
    <property type="resolution" value="4.00 A"/>
    <property type="chains" value="A/B=1-315"/>
</dbReference>
<dbReference type="PDB" id="6ASG">
    <property type="method" value="X-ray"/>
    <property type="resolution" value="3.80 A"/>
    <property type="chains" value="A/B=1-315"/>
</dbReference>
<dbReference type="PDB" id="6CUU">
    <property type="method" value="X-ray"/>
    <property type="resolution" value="2.99 A"/>
    <property type="chains" value="A/B=1-315"/>
</dbReference>
<dbReference type="PDB" id="6KQD">
    <property type="method" value="X-ray"/>
    <property type="resolution" value="3.30 A"/>
    <property type="chains" value="A/B/K/L=1-315"/>
</dbReference>
<dbReference type="PDB" id="6KQE">
    <property type="method" value="X-ray"/>
    <property type="resolution" value="3.30 A"/>
    <property type="chains" value="A/B=1-315"/>
</dbReference>
<dbReference type="PDB" id="6KQF">
    <property type="method" value="X-ray"/>
    <property type="resolution" value="2.45 A"/>
    <property type="chains" value="A/B=1-315"/>
</dbReference>
<dbReference type="PDB" id="6KQG">
    <property type="method" value="X-ray"/>
    <property type="resolution" value="2.78 A"/>
    <property type="chains" value="A/B=1-315"/>
</dbReference>
<dbReference type="PDB" id="6KQH">
    <property type="method" value="X-ray"/>
    <property type="resolution" value="3.18 A"/>
    <property type="chains" value="A/B=1-315"/>
</dbReference>
<dbReference type="PDB" id="6KQL">
    <property type="method" value="X-ray"/>
    <property type="resolution" value="2.89 A"/>
    <property type="chains" value="A/B=1-315"/>
</dbReference>
<dbReference type="PDB" id="6KQM">
    <property type="method" value="X-ray"/>
    <property type="resolution" value="3.20 A"/>
    <property type="chains" value="A/B=1-315"/>
</dbReference>
<dbReference type="PDB" id="6KQN">
    <property type="method" value="X-ray"/>
    <property type="resolution" value="3.49 A"/>
    <property type="chains" value="A/B=1-315"/>
</dbReference>
<dbReference type="PDB" id="6L74">
    <property type="method" value="X-ray"/>
    <property type="resolution" value="3.12 A"/>
    <property type="chains" value="A/B=1-315"/>
</dbReference>
<dbReference type="PDB" id="6LTS">
    <property type="method" value="X-ray"/>
    <property type="resolution" value="3.45 A"/>
    <property type="chains" value="A/B=1-315"/>
</dbReference>
<dbReference type="PDB" id="6M6A">
    <property type="method" value="EM"/>
    <property type="resolution" value="5.00 A"/>
    <property type="chains" value="A/B=1-315"/>
</dbReference>
<dbReference type="PDB" id="6M6B">
    <property type="method" value="EM"/>
    <property type="resolution" value="4.10 A"/>
    <property type="chains" value="A/B=1-315"/>
</dbReference>
<dbReference type="PDB" id="6M6C">
    <property type="method" value="EM"/>
    <property type="resolution" value="3.10 A"/>
    <property type="chains" value="A/B=1-315"/>
</dbReference>
<dbReference type="PDB" id="6OVR">
    <property type="method" value="X-ray"/>
    <property type="resolution" value="2.84 A"/>
    <property type="chains" value="A/B=1-315"/>
</dbReference>
<dbReference type="PDB" id="6OVY">
    <property type="method" value="X-ray"/>
    <property type="resolution" value="3.00 A"/>
    <property type="chains" value="A/B=1-315"/>
</dbReference>
<dbReference type="PDB" id="6OW3">
    <property type="method" value="X-ray"/>
    <property type="resolution" value="2.77 A"/>
    <property type="chains" value="A/B=1-315"/>
</dbReference>
<dbReference type="PDB" id="6OY5">
    <property type="method" value="X-ray"/>
    <property type="resolution" value="3.10 A"/>
    <property type="chains" value="A/B=1-315"/>
</dbReference>
<dbReference type="PDB" id="6OY6">
    <property type="method" value="X-ray"/>
    <property type="resolution" value="3.10 A"/>
    <property type="chains" value="A/B=1-315"/>
</dbReference>
<dbReference type="PDB" id="6OY7">
    <property type="method" value="X-ray"/>
    <property type="resolution" value="3.04 A"/>
    <property type="chains" value="A/B=1-315"/>
</dbReference>
<dbReference type="PDB" id="6P70">
    <property type="method" value="X-ray"/>
    <property type="resolution" value="3.05 A"/>
    <property type="chains" value="A/B=1-315"/>
</dbReference>
<dbReference type="PDB" id="6P71">
    <property type="method" value="X-ray"/>
    <property type="resolution" value="2.92 A"/>
    <property type="chains" value="A/B=1-315"/>
</dbReference>
<dbReference type="PDB" id="6WOX">
    <property type="method" value="X-ray"/>
    <property type="resolution" value="3.14 A"/>
    <property type="chains" value="A/B=1-315"/>
</dbReference>
<dbReference type="PDB" id="6WOY">
    <property type="method" value="X-ray"/>
    <property type="resolution" value="3.00 A"/>
    <property type="chains" value="A/B=1-315"/>
</dbReference>
<dbReference type="PDB" id="7EH0">
    <property type="method" value="X-ray"/>
    <property type="resolution" value="2.81 A"/>
    <property type="chains" value="A/B=1-315"/>
</dbReference>
<dbReference type="PDB" id="7EH1">
    <property type="method" value="X-ray"/>
    <property type="resolution" value="2.90 A"/>
    <property type="chains" value="A/B=1-315"/>
</dbReference>
<dbReference type="PDB" id="7EH2">
    <property type="method" value="X-ray"/>
    <property type="resolution" value="3.34 A"/>
    <property type="chains" value="A/B/K/L=1-315"/>
</dbReference>
<dbReference type="PDB" id="7MLB">
    <property type="method" value="X-ray"/>
    <property type="resolution" value="3.60 A"/>
    <property type="chains" value="A/B=1-315"/>
</dbReference>
<dbReference type="PDB" id="7MLI">
    <property type="method" value="X-ray"/>
    <property type="resolution" value="3.60 A"/>
    <property type="chains" value="A/B=1-315"/>
</dbReference>
<dbReference type="PDB" id="7MLJ">
    <property type="method" value="X-ray"/>
    <property type="resolution" value="3.75 A"/>
    <property type="chains" value="A/B=1-315"/>
</dbReference>
<dbReference type="PDB" id="7RDQ">
    <property type="method" value="EM"/>
    <property type="resolution" value="3.00 A"/>
    <property type="chains" value="A/B=1-315"/>
</dbReference>
<dbReference type="PDB" id="8HSG">
    <property type="method" value="EM"/>
    <property type="resolution" value="3.20 A"/>
    <property type="chains" value="G/H=1-315"/>
</dbReference>
<dbReference type="PDB" id="8HSH">
    <property type="method" value="EM"/>
    <property type="resolution" value="3.40 A"/>
    <property type="chains" value="G/H=1-315"/>
</dbReference>
<dbReference type="PDB" id="8HSL">
    <property type="method" value="EM"/>
    <property type="resolution" value="5.80 A"/>
    <property type="chains" value="G/H=1-315"/>
</dbReference>
<dbReference type="PDB" id="8HSR">
    <property type="method" value="EM"/>
    <property type="resolution" value="4.00 A"/>
    <property type="chains" value="G/H=1-315"/>
</dbReference>
<dbReference type="PDB" id="8W8N">
    <property type="method" value="X-ray"/>
    <property type="resolution" value="2.69 A"/>
    <property type="chains" value="A/B=1-315"/>
</dbReference>
<dbReference type="PDB" id="8W8O">
    <property type="method" value="X-ray"/>
    <property type="resolution" value="2.51 A"/>
    <property type="chains" value="A/B=1-315"/>
</dbReference>
<dbReference type="PDB" id="8W8P">
    <property type="method" value="X-ray"/>
    <property type="resolution" value="3.17 A"/>
    <property type="chains" value="A/B=1-315"/>
</dbReference>
<dbReference type="PDBsum" id="1ZYR"/>
<dbReference type="PDBsum" id="2A68"/>
<dbReference type="PDBsum" id="2A69"/>
<dbReference type="PDBsum" id="2A6E"/>
<dbReference type="PDBsum" id="2A6H"/>
<dbReference type="PDBsum" id="2BE5"/>
<dbReference type="PDBsum" id="2CW0"/>
<dbReference type="PDBsum" id="2O5I"/>
<dbReference type="PDBsum" id="2O5J"/>
<dbReference type="PDBsum" id="3AOH"/>
<dbReference type="PDBsum" id="3AOI"/>
<dbReference type="PDBsum" id="3DXJ"/>
<dbReference type="PDBsum" id="3WOD"/>
<dbReference type="PDBsum" id="4G7H"/>
<dbReference type="PDBsum" id="4G7O"/>
<dbReference type="PDBsum" id="4G7Z"/>
<dbReference type="PDBsum" id="4GZY"/>
<dbReference type="PDBsum" id="4GZZ"/>
<dbReference type="PDBsum" id="4MQ9"/>
<dbReference type="PDBsum" id="4OIN"/>
<dbReference type="PDBsum" id="4OIO"/>
<dbReference type="PDBsum" id="4OIP"/>
<dbReference type="PDBsum" id="4OIQ"/>
<dbReference type="PDBsum" id="4OIR"/>
<dbReference type="PDBsum" id="4WQS"/>
<dbReference type="PDBsum" id="4WQT"/>
<dbReference type="PDBsum" id="5D4C"/>
<dbReference type="PDBsum" id="5D4D"/>
<dbReference type="PDBsum" id="5D4E"/>
<dbReference type="PDBsum" id="5E17"/>
<dbReference type="PDBsum" id="5E18"/>
<dbReference type="PDBsum" id="5I2D"/>
<dbReference type="PDBsum" id="5TMC"/>
<dbReference type="PDBsum" id="5TMF"/>
<dbReference type="PDBsum" id="5VO8"/>
<dbReference type="PDBsum" id="5VOI"/>
<dbReference type="PDBsum" id="5X21"/>
<dbReference type="PDBsum" id="5X22"/>
<dbReference type="PDBsum" id="5XJ0"/>
<dbReference type="PDBsum" id="6ASG"/>
<dbReference type="PDBsum" id="6CUU"/>
<dbReference type="PDBsum" id="6KQD"/>
<dbReference type="PDBsum" id="6KQE"/>
<dbReference type="PDBsum" id="6KQF"/>
<dbReference type="PDBsum" id="6KQG"/>
<dbReference type="PDBsum" id="6KQH"/>
<dbReference type="PDBsum" id="6KQL"/>
<dbReference type="PDBsum" id="6KQM"/>
<dbReference type="PDBsum" id="6KQN"/>
<dbReference type="PDBsum" id="6L74"/>
<dbReference type="PDBsum" id="6LTS"/>
<dbReference type="PDBsum" id="6M6A"/>
<dbReference type="PDBsum" id="6M6B"/>
<dbReference type="PDBsum" id="6M6C"/>
<dbReference type="PDBsum" id="6OVR"/>
<dbReference type="PDBsum" id="6OVY"/>
<dbReference type="PDBsum" id="6OW3"/>
<dbReference type="PDBsum" id="6OY5"/>
<dbReference type="PDBsum" id="6OY6"/>
<dbReference type="PDBsum" id="6OY7"/>
<dbReference type="PDBsum" id="6P70"/>
<dbReference type="PDBsum" id="6P71"/>
<dbReference type="PDBsum" id="6WOX"/>
<dbReference type="PDBsum" id="6WOY"/>
<dbReference type="PDBsum" id="7EH0"/>
<dbReference type="PDBsum" id="7EH1"/>
<dbReference type="PDBsum" id="7EH2"/>
<dbReference type="PDBsum" id="7MLB"/>
<dbReference type="PDBsum" id="7MLI"/>
<dbReference type="PDBsum" id="7MLJ"/>
<dbReference type="PDBsum" id="7RDQ"/>
<dbReference type="PDBsum" id="8HSG"/>
<dbReference type="PDBsum" id="8HSH"/>
<dbReference type="PDBsum" id="8HSL"/>
<dbReference type="PDBsum" id="8HSR"/>
<dbReference type="PDBsum" id="8W8N"/>
<dbReference type="PDBsum" id="8W8O"/>
<dbReference type="PDBsum" id="8W8P"/>
<dbReference type="BMRB" id="Q5SHR6"/>
<dbReference type="EMDB" id="EMD-24424"/>
<dbReference type="EMDB" id="EMD-30117"/>
<dbReference type="EMDB" id="EMD-30118"/>
<dbReference type="EMDB" id="EMD-30119"/>
<dbReference type="EMDB" id="EMD-34996"/>
<dbReference type="EMDB" id="EMD-34997"/>
<dbReference type="EMDB" id="EMD-35000"/>
<dbReference type="EMDB" id="EMD-35004"/>
<dbReference type="SMR" id="Q5SHR6"/>
<dbReference type="DIP" id="DIP-47009N"/>
<dbReference type="IntAct" id="Q5SHR6">
    <property type="interactions" value="6"/>
</dbReference>
<dbReference type="DrugBank" id="DB08266">
    <property type="generic name" value="Methyl [(1E,5R)-5-{3-[(2E,4E)-2,5-dimethyl-2,4-octadienoyl]-2,4-dioxo-3,4-dihydro-2H-pyran-6-yl}hexylidene]carbamate"/>
</dbReference>
<dbReference type="EnsemblBacteria" id="BAD71487">
    <property type="protein sequence ID" value="BAD71487"/>
    <property type="gene ID" value="BAD71487"/>
</dbReference>
<dbReference type="GeneID" id="3169128"/>
<dbReference type="KEGG" id="ttj:TTHA1664"/>
<dbReference type="PATRIC" id="fig|300852.9.peg.1634"/>
<dbReference type="eggNOG" id="COG0202">
    <property type="taxonomic scope" value="Bacteria"/>
</dbReference>
<dbReference type="HOGENOM" id="CLU_053084_0_1_0"/>
<dbReference type="PhylomeDB" id="Q5SHR6"/>
<dbReference type="BRENDA" id="2.7.7.6">
    <property type="organism ID" value="2305"/>
</dbReference>
<dbReference type="EvolutionaryTrace" id="Q5SHR6"/>
<dbReference type="Proteomes" id="UP000000532">
    <property type="component" value="Chromosome"/>
</dbReference>
<dbReference type="GO" id="GO:0005737">
    <property type="term" value="C:cytoplasm"/>
    <property type="evidence" value="ECO:0007669"/>
    <property type="project" value="UniProtKB-ARBA"/>
</dbReference>
<dbReference type="GO" id="GO:0000428">
    <property type="term" value="C:DNA-directed RNA polymerase complex"/>
    <property type="evidence" value="ECO:0007669"/>
    <property type="project" value="UniProtKB-KW"/>
</dbReference>
<dbReference type="GO" id="GO:0003677">
    <property type="term" value="F:DNA binding"/>
    <property type="evidence" value="ECO:0007669"/>
    <property type="project" value="UniProtKB-UniRule"/>
</dbReference>
<dbReference type="GO" id="GO:0003899">
    <property type="term" value="F:DNA-directed RNA polymerase activity"/>
    <property type="evidence" value="ECO:0007669"/>
    <property type="project" value="UniProtKB-UniRule"/>
</dbReference>
<dbReference type="GO" id="GO:0046983">
    <property type="term" value="F:protein dimerization activity"/>
    <property type="evidence" value="ECO:0007669"/>
    <property type="project" value="InterPro"/>
</dbReference>
<dbReference type="GO" id="GO:0006351">
    <property type="term" value="P:DNA-templated transcription"/>
    <property type="evidence" value="ECO:0007669"/>
    <property type="project" value="UniProtKB-UniRule"/>
</dbReference>
<dbReference type="CDD" id="cd06928">
    <property type="entry name" value="RNAP_alpha_NTD"/>
    <property type="match status" value="1"/>
</dbReference>
<dbReference type="FunFam" id="2.170.120.12:FF:000001">
    <property type="entry name" value="DNA-directed RNA polymerase subunit alpha"/>
    <property type="match status" value="1"/>
</dbReference>
<dbReference type="Gene3D" id="1.10.150.20">
    <property type="entry name" value="5' to 3' exonuclease, C-terminal subdomain"/>
    <property type="match status" value="1"/>
</dbReference>
<dbReference type="Gene3D" id="2.170.120.12">
    <property type="entry name" value="DNA-directed RNA polymerase, insert domain"/>
    <property type="match status" value="1"/>
</dbReference>
<dbReference type="Gene3D" id="3.30.1360.10">
    <property type="entry name" value="RNA polymerase, RBP11-like subunit"/>
    <property type="match status" value="1"/>
</dbReference>
<dbReference type="HAMAP" id="MF_00059">
    <property type="entry name" value="RNApol_bact_RpoA"/>
    <property type="match status" value="1"/>
</dbReference>
<dbReference type="InterPro" id="IPR011262">
    <property type="entry name" value="DNA-dir_RNA_pol_insert"/>
</dbReference>
<dbReference type="InterPro" id="IPR011263">
    <property type="entry name" value="DNA-dir_RNA_pol_RpoA/D/Rpb3"/>
</dbReference>
<dbReference type="InterPro" id="IPR011773">
    <property type="entry name" value="DNA-dir_RpoA"/>
</dbReference>
<dbReference type="InterPro" id="IPR036603">
    <property type="entry name" value="RBP11-like"/>
</dbReference>
<dbReference type="InterPro" id="IPR011260">
    <property type="entry name" value="RNAP_asu_C"/>
</dbReference>
<dbReference type="InterPro" id="IPR036643">
    <property type="entry name" value="RNApol_insert_sf"/>
</dbReference>
<dbReference type="NCBIfam" id="NF003513">
    <property type="entry name" value="PRK05182.1-2"/>
    <property type="match status" value="1"/>
</dbReference>
<dbReference type="NCBIfam" id="NF003519">
    <property type="entry name" value="PRK05182.2-5"/>
    <property type="match status" value="1"/>
</dbReference>
<dbReference type="NCBIfam" id="TIGR02027">
    <property type="entry name" value="rpoA"/>
    <property type="match status" value="1"/>
</dbReference>
<dbReference type="Pfam" id="PF01000">
    <property type="entry name" value="RNA_pol_A_bac"/>
    <property type="match status" value="1"/>
</dbReference>
<dbReference type="Pfam" id="PF03118">
    <property type="entry name" value="RNA_pol_A_CTD"/>
    <property type="match status" value="1"/>
</dbReference>
<dbReference type="Pfam" id="PF01193">
    <property type="entry name" value="RNA_pol_L"/>
    <property type="match status" value="1"/>
</dbReference>
<dbReference type="SMART" id="SM00662">
    <property type="entry name" value="RPOLD"/>
    <property type="match status" value="1"/>
</dbReference>
<dbReference type="SUPFAM" id="SSF47789">
    <property type="entry name" value="C-terminal domain of RNA polymerase alpha subunit"/>
    <property type="match status" value="1"/>
</dbReference>
<dbReference type="SUPFAM" id="SSF56553">
    <property type="entry name" value="Insert subdomain of RNA polymerase alpha subunit"/>
    <property type="match status" value="1"/>
</dbReference>
<dbReference type="SUPFAM" id="SSF55257">
    <property type="entry name" value="RBP11-like subunits of RNA polymerase"/>
    <property type="match status" value="1"/>
</dbReference>
<gene>
    <name type="primary">rpoA</name>
    <name type="ordered locus">TTHA1664</name>
</gene>
<reference key="1">
    <citation type="journal article" date="1999" name="J. Biochem.">
        <title>Cloning of the RNA polymerase alpha subunit gene from Thermus thermophilus HB8 and characterization of the protein.</title>
        <authorList>
            <person name="Wada T."/>
            <person name="Yamazaki T."/>
            <person name="Kuramitsu S."/>
            <person name="Kyogoku Y."/>
        </authorList>
    </citation>
    <scope>NUCLEOTIDE SEQUENCE [GENOMIC DNA]</scope>
</reference>
<reference key="2">
    <citation type="submission" date="2004-11" db="EMBL/GenBank/DDBJ databases">
        <title>Complete genome sequence of Thermus thermophilus HB8.</title>
        <authorList>
            <person name="Masui R."/>
            <person name="Kurokawa K."/>
            <person name="Nakagawa N."/>
            <person name="Tokunaga F."/>
            <person name="Koyama Y."/>
            <person name="Shibata T."/>
            <person name="Oshima T."/>
            <person name="Yokoyama S."/>
            <person name="Yasunaga T."/>
            <person name="Kuramitsu S."/>
        </authorList>
    </citation>
    <scope>NUCLEOTIDE SEQUENCE [LARGE SCALE GENOMIC DNA]</scope>
    <source>
        <strain>ATCC 27634 / DSM 579 / HB8</strain>
    </source>
</reference>
<keyword id="KW-0002">3D-structure</keyword>
<keyword id="KW-0240">DNA-directed RNA polymerase</keyword>
<keyword id="KW-0548">Nucleotidyltransferase</keyword>
<keyword id="KW-1185">Reference proteome</keyword>
<keyword id="KW-0804">Transcription</keyword>
<keyword id="KW-0808">Transferase</keyword>
<protein>
    <recommendedName>
        <fullName>DNA-directed RNA polymerase subunit alpha</fullName>
        <shortName>RNAP subunit alpha</shortName>
        <ecNumber>2.7.7.6</ecNumber>
    </recommendedName>
    <alternativeName>
        <fullName>RNA polymerase subunit alpha</fullName>
    </alternativeName>
    <alternativeName>
        <fullName>Transcriptase subunit alpha</fullName>
    </alternativeName>
</protein>
<organism>
    <name type="scientific">Thermus thermophilus (strain ATCC 27634 / DSM 579 / HB8)</name>
    <dbReference type="NCBI Taxonomy" id="300852"/>
    <lineage>
        <taxon>Bacteria</taxon>
        <taxon>Thermotogati</taxon>
        <taxon>Deinococcota</taxon>
        <taxon>Deinococci</taxon>
        <taxon>Thermales</taxon>
        <taxon>Thermaceae</taxon>
        <taxon>Thermus</taxon>
    </lineage>
</organism>
<comment type="function">
    <text>DNA-dependent RNA polymerase catalyzes the transcription of DNA into RNA using the four ribonucleoside triphosphates as substrates.</text>
</comment>
<comment type="catalytic activity">
    <reaction>
        <text>RNA(n) + a ribonucleoside 5'-triphosphate = RNA(n+1) + diphosphate</text>
        <dbReference type="Rhea" id="RHEA:21248"/>
        <dbReference type="Rhea" id="RHEA-COMP:14527"/>
        <dbReference type="Rhea" id="RHEA-COMP:17342"/>
        <dbReference type="ChEBI" id="CHEBI:33019"/>
        <dbReference type="ChEBI" id="CHEBI:61557"/>
        <dbReference type="ChEBI" id="CHEBI:140395"/>
        <dbReference type="EC" id="2.7.7.6"/>
    </reaction>
</comment>
<comment type="subunit">
    <text evidence="1">Homodimer. The RNAP catalytic core consists of 2 alpha, 1 beta, 1 beta' and 1 omega subunit. When a sigma factor is associated with the core the holoenzyme is formed, which can initiate transcription (By similarity).</text>
</comment>
<comment type="interaction">
    <interactant intactId="EBI-2106870">
        <id>Q5SHR6</id>
    </interactant>
    <interactant intactId="EBI-2106930">
        <id>Q8RQE8</id>
        <label>rpoC</label>
    </interactant>
    <organismsDiffer>false</organismsDiffer>
    <experiments>4</experiments>
</comment>
<comment type="interaction">
    <interactant intactId="EBI-2106870">
        <id>Q5SHR6</id>
    </interactant>
    <interactant intactId="EBI-16208148">
        <id>Q53W63</id>
        <label>TTHB099</label>
    </interactant>
    <organismsDiffer>false</organismsDiffer>
    <experiments>2</experiments>
</comment>
<comment type="domain">
    <text evidence="1">The N-terminal domain is essential for RNAP assembly and basal transcription, whereas the C-terminal domain is involved in interaction with transcriptional regulators and with upstream promoter elements.</text>
</comment>
<comment type="similarity">
    <text evidence="2">Belongs to the RNA polymerase alpha chain family.</text>
</comment>
<evidence type="ECO:0000250" key="1"/>
<evidence type="ECO:0000305" key="2"/>
<evidence type="ECO:0007829" key="3">
    <source>
        <dbReference type="PDB" id="1ZYR"/>
    </source>
</evidence>
<evidence type="ECO:0007829" key="4">
    <source>
        <dbReference type="PDB" id="2A6H"/>
    </source>
</evidence>
<evidence type="ECO:0007829" key="5">
    <source>
        <dbReference type="PDB" id="2CW0"/>
    </source>
</evidence>
<evidence type="ECO:0007829" key="6">
    <source>
        <dbReference type="PDB" id="5TMC"/>
    </source>
</evidence>
<evidence type="ECO:0007829" key="7">
    <source>
        <dbReference type="PDB" id="5TMF"/>
    </source>
</evidence>
<evidence type="ECO:0007829" key="8">
    <source>
        <dbReference type="PDB" id="5VOI"/>
    </source>
</evidence>
<evidence type="ECO:0007829" key="9">
    <source>
        <dbReference type="PDB" id="6KQF"/>
    </source>
</evidence>
<evidence type="ECO:0007829" key="10">
    <source>
        <dbReference type="PDB" id="6WOY"/>
    </source>
</evidence>
<sequence>MLDSKLKAPVFTVRTQGREYGEFVLEPLERGFGVTLGNPLRRILLSSIPGTAVTSVYIEDVLHEFSTIPGVKEDVVEIILNLKELVVRFLNPSLQTVTLLLKAEGPKEVKARDFLPVADVEIMNPDLHIATLEEGGRLNMEVRVDRGVGYVPAEKHGIKDRINAIPVDAVFSPVRRVAFQVEDTRLGQRTDLDKLTLRIWTDGSVTPLEALNQAVEILREHLTYFSNPQAAAVAAPEEAKEPEAPPEQEEELDLPLEELGLSTRVLHSLKEEGIESVRALLALNLKDLKNIPGIGERSLEEIKEALEKKGFTLKE</sequence>